<evidence type="ECO:0000250" key="1">
    <source>
        <dbReference type="UniProtKB" id="P46154"/>
    </source>
</evidence>
<evidence type="ECO:0000269" key="2">
    <source>
    </source>
</evidence>
<evidence type="ECO:0000269" key="3">
    <source>
    </source>
</evidence>
<evidence type="ECO:0000303" key="4">
    <source>
    </source>
</evidence>
<evidence type="ECO:0000303" key="5">
    <source>
    </source>
</evidence>
<evidence type="ECO:0000305" key="6"/>
<evidence type="ECO:0000312" key="7">
    <source>
        <dbReference type="EMBL" id="CAB16062.1"/>
    </source>
</evidence>
<protein>
    <recommendedName>
        <fullName evidence="4">Glutathione-independent formaldehyde dehydrogenase</fullName>
        <shortName evidence="6">FALDH</shortName>
        <shortName evidence="4">FDH</shortName>
        <ecNumber evidence="3">1.2.1.46</ecNumber>
    </recommendedName>
</protein>
<dbReference type="EC" id="1.2.1.46" evidence="3"/>
<dbReference type="EMBL" id="D78193">
    <property type="protein sequence ID" value="BAA11284.1"/>
    <property type="molecule type" value="Genomic_DNA"/>
</dbReference>
<dbReference type="EMBL" id="AL009126">
    <property type="protein sequence ID" value="CAB16062.1"/>
    <property type="molecule type" value="Genomic_DNA"/>
</dbReference>
<dbReference type="PIR" id="F70090">
    <property type="entry name" value="F70090"/>
</dbReference>
<dbReference type="RefSeq" id="NP_391905.1">
    <property type="nucleotide sequence ID" value="NC_000964.3"/>
</dbReference>
<dbReference type="SMR" id="Q45604"/>
<dbReference type="FunCoup" id="Q45604">
    <property type="interactions" value="120"/>
</dbReference>
<dbReference type="STRING" id="224308.BSU40250"/>
<dbReference type="PaxDb" id="224308-BSU40250"/>
<dbReference type="EnsemblBacteria" id="CAB16062">
    <property type="protein sequence ID" value="CAB16062"/>
    <property type="gene ID" value="BSU_40250"/>
</dbReference>
<dbReference type="GeneID" id="937754"/>
<dbReference type="KEGG" id="bsu:BSU40250"/>
<dbReference type="PATRIC" id="fig|224308.43.peg.4223"/>
<dbReference type="eggNOG" id="COG1063">
    <property type="taxonomic scope" value="Bacteria"/>
</dbReference>
<dbReference type="InParanoid" id="Q45604"/>
<dbReference type="OrthoDB" id="9769198at2"/>
<dbReference type="PhylomeDB" id="Q45604"/>
<dbReference type="BioCyc" id="BSUB:BSU40250-MONOMER"/>
<dbReference type="Proteomes" id="UP000001570">
    <property type="component" value="Chromosome"/>
</dbReference>
<dbReference type="GO" id="GO:0018467">
    <property type="term" value="F:formaldehyde dehydrogenase (NAD+) activity"/>
    <property type="evidence" value="ECO:0007669"/>
    <property type="project" value="RHEA"/>
</dbReference>
<dbReference type="GO" id="GO:0008270">
    <property type="term" value="F:zinc ion binding"/>
    <property type="evidence" value="ECO:0007669"/>
    <property type="project" value="InterPro"/>
</dbReference>
<dbReference type="CDD" id="cd08282">
    <property type="entry name" value="PFDH_like"/>
    <property type="match status" value="1"/>
</dbReference>
<dbReference type="Gene3D" id="3.90.180.10">
    <property type="entry name" value="Medium-chain alcohol dehydrogenases, catalytic domain"/>
    <property type="match status" value="1"/>
</dbReference>
<dbReference type="Gene3D" id="3.40.50.720">
    <property type="entry name" value="NAD(P)-binding Rossmann-like Domain"/>
    <property type="match status" value="1"/>
</dbReference>
<dbReference type="InterPro" id="IPR013149">
    <property type="entry name" value="ADH-like_C"/>
</dbReference>
<dbReference type="InterPro" id="IPR013154">
    <property type="entry name" value="ADH-like_N"/>
</dbReference>
<dbReference type="InterPro" id="IPR002328">
    <property type="entry name" value="ADH_Zn_CS"/>
</dbReference>
<dbReference type="InterPro" id="IPR011032">
    <property type="entry name" value="GroES-like_sf"/>
</dbReference>
<dbReference type="InterPro" id="IPR014184">
    <property type="entry name" value="HCHO_DH_non_GSH"/>
</dbReference>
<dbReference type="InterPro" id="IPR036291">
    <property type="entry name" value="NAD(P)-bd_dom_sf"/>
</dbReference>
<dbReference type="NCBIfam" id="TIGR02819">
    <property type="entry name" value="fdhA_non_GSH"/>
    <property type="match status" value="1"/>
</dbReference>
<dbReference type="PANTHER" id="PTHR42813:SF3">
    <property type="entry name" value="GLUTATHIONE-INDEPENDENT FORMALDEHYDE DEHYDROGENASE"/>
    <property type="match status" value="1"/>
</dbReference>
<dbReference type="PANTHER" id="PTHR42813">
    <property type="entry name" value="ZINC-TYPE ALCOHOL DEHYDROGENASE-LIKE"/>
    <property type="match status" value="1"/>
</dbReference>
<dbReference type="Pfam" id="PF08240">
    <property type="entry name" value="ADH_N"/>
    <property type="match status" value="1"/>
</dbReference>
<dbReference type="Pfam" id="PF00107">
    <property type="entry name" value="ADH_zinc_N"/>
    <property type="match status" value="1"/>
</dbReference>
<dbReference type="SUPFAM" id="SSF50129">
    <property type="entry name" value="GroES-like"/>
    <property type="match status" value="1"/>
</dbReference>
<dbReference type="SUPFAM" id="SSF51735">
    <property type="entry name" value="NAD(P)-binding Rossmann-fold domains"/>
    <property type="match status" value="1"/>
</dbReference>
<dbReference type="PROSITE" id="PS00059">
    <property type="entry name" value="ADH_ZINC"/>
    <property type="match status" value="1"/>
</dbReference>
<keyword id="KW-0479">Metal-binding</keyword>
<keyword id="KW-0520">NAD</keyword>
<keyword id="KW-0560">Oxidoreductase</keyword>
<keyword id="KW-1185">Reference proteome</keyword>
<keyword id="KW-0862">Zinc</keyword>
<reference key="1">
    <citation type="journal article" date="1997" name="DNA Res.">
        <title>Sequence analysis of the 36-kb region between gntZ and trnY genes of Bacillus subtilis genome.</title>
        <authorList>
            <person name="Kasahara Y."/>
            <person name="Nakai S."/>
            <person name="Ogasawara N."/>
        </authorList>
    </citation>
    <scope>NUCLEOTIDE SEQUENCE [GENOMIC DNA]</scope>
    <source>
        <strain>168</strain>
    </source>
</reference>
<reference key="2">
    <citation type="journal article" date="1997" name="Nature">
        <title>The complete genome sequence of the Gram-positive bacterium Bacillus subtilis.</title>
        <authorList>
            <person name="Kunst F."/>
            <person name="Ogasawara N."/>
            <person name="Moszer I."/>
            <person name="Albertini A.M."/>
            <person name="Alloni G."/>
            <person name="Azevedo V."/>
            <person name="Bertero M.G."/>
            <person name="Bessieres P."/>
            <person name="Bolotin A."/>
            <person name="Borchert S."/>
            <person name="Borriss R."/>
            <person name="Boursier L."/>
            <person name="Brans A."/>
            <person name="Braun M."/>
            <person name="Brignell S.C."/>
            <person name="Bron S."/>
            <person name="Brouillet S."/>
            <person name="Bruschi C.V."/>
            <person name="Caldwell B."/>
            <person name="Capuano V."/>
            <person name="Carter N.M."/>
            <person name="Choi S.-K."/>
            <person name="Codani J.-J."/>
            <person name="Connerton I.F."/>
            <person name="Cummings N.J."/>
            <person name="Daniel R.A."/>
            <person name="Denizot F."/>
            <person name="Devine K.M."/>
            <person name="Duesterhoeft A."/>
            <person name="Ehrlich S.D."/>
            <person name="Emmerson P.T."/>
            <person name="Entian K.-D."/>
            <person name="Errington J."/>
            <person name="Fabret C."/>
            <person name="Ferrari E."/>
            <person name="Foulger D."/>
            <person name="Fritz C."/>
            <person name="Fujita M."/>
            <person name="Fujita Y."/>
            <person name="Fuma S."/>
            <person name="Galizzi A."/>
            <person name="Galleron N."/>
            <person name="Ghim S.-Y."/>
            <person name="Glaser P."/>
            <person name="Goffeau A."/>
            <person name="Golightly E.J."/>
            <person name="Grandi G."/>
            <person name="Guiseppi G."/>
            <person name="Guy B.J."/>
            <person name="Haga K."/>
            <person name="Haiech J."/>
            <person name="Harwood C.R."/>
            <person name="Henaut A."/>
            <person name="Hilbert H."/>
            <person name="Holsappel S."/>
            <person name="Hosono S."/>
            <person name="Hullo M.-F."/>
            <person name="Itaya M."/>
            <person name="Jones L.-M."/>
            <person name="Joris B."/>
            <person name="Karamata D."/>
            <person name="Kasahara Y."/>
            <person name="Klaerr-Blanchard M."/>
            <person name="Klein C."/>
            <person name="Kobayashi Y."/>
            <person name="Koetter P."/>
            <person name="Koningstein G."/>
            <person name="Krogh S."/>
            <person name="Kumano M."/>
            <person name="Kurita K."/>
            <person name="Lapidus A."/>
            <person name="Lardinois S."/>
            <person name="Lauber J."/>
            <person name="Lazarevic V."/>
            <person name="Lee S.-M."/>
            <person name="Levine A."/>
            <person name="Liu H."/>
            <person name="Masuda S."/>
            <person name="Mauel C."/>
            <person name="Medigue C."/>
            <person name="Medina N."/>
            <person name="Mellado R.P."/>
            <person name="Mizuno M."/>
            <person name="Moestl D."/>
            <person name="Nakai S."/>
            <person name="Noback M."/>
            <person name="Noone D."/>
            <person name="O'Reilly M."/>
            <person name="Ogawa K."/>
            <person name="Ogiwara A."/>
            <person name="Oudega B."/>
            <person name="Park S.-H."/>
            <person name="Parro V."/>
            <person name="Pohl T.M."/>
            <person name="Portetelle D."/>
            <person name="Porwollik S."/>
            <person name="Prescott A.M."/>
            <person name="Presecan E."/>
            <person name="Pujic P."/>
            <person name="Purnelle B."/>
            <person name="Rapoport G."/>
            <person name="Rey M."/>
            <person name="Reynolds S."/>
            <person name="Rieger M."/>
            <person name="Rivolta C."/>
            <person name="Rocha E."/>
            <person name="Roche B."/>
            <person name="Rose M."/>
            <person name="Sadaie Y."/>
            <person name="Sato T."/>
            <person name="Scanlan E."/>
            <person name="Schleich S."/>
            <person name="Schroeter R."/>
            <person name="Scoffone F."/>
            <person name="Sekiguchi J."/>
            <person name="Sekowska A."/>
            <person name="Seror S.J."/>
            <person name="Serror P."/>
            <person name="Shin B.-S."/>
            <person name="Soldo B."/>
            <person name="Sorokin A."/>
            <person name="Tacconi E."/>
            <person name="Takagi T."/>
            <person name="Takahashi H."/>
            <person name="Takemaru K."/>
            <person name="Takeuchi M."/>
            <person name="Tamakoshi A."/>
            <person name="Tanaka T."/>
            <person name="Terpstra P."/>
            <person name="Tognoni A."/>
            <person name="Tosato V."/>
            <person name="Uchiyama S."/>
            <person name="Vandenbol M."/>
            <person name="Vannier F."/>
            <person name="Vassarotti A."/>
            <person name="Viari A."/>
            <person name="Wambutt R."/>
            <person name="Wedler E."/>
            <person name="Wedler H."/>
            <person name="Weitzenegger T."/>
            <person name="Winters P."/>
            <person name="Wipat A."/>
            <person name="Yamamoto H."/>
            <person name="Yamane K."/>
            <person name="Yasumoto K."/>
            <person name="Yata K."/>
            <person name="Yoshida K."/>
            <person name="Yoshikawa H.-F."/>
            <person name="Zumstein E."/>
            <person name="Yoshikawa H."/>
            <person name="Danchin A."/>
        </authorList>
    </citation>
    <scope>NUCLEOTIDE SEQUENCE [LARGE SCALE GENOMIC DNA]</scope>
    <source>
        <strain>168</strain>
    </source>
</reference>
<reference key="3">
    <citation type="journal article" date="2008" name="Appl. Environ. Microbiol.">
        <title>The Bacillus subtilis ydjL (bdhA) gene encodes acetoin reductase/2,3-butanediol dehydrogenase.</title>
        <authorList>
            <person name="Nicholson W.L."/>
        </authorList>
    </citation>
    <scope>DISRUPTION PHENOTYPE</scope>
    <source>
        <strain>168</strain>
    </source>
</reference>
<reference key="4">
    <citation type="journal article" date="2024" name="Appl. Environ. Microbiol.">
        <title>Identification and characterization of a novel formaldehyde dehydrogenase in Bacillus subtilis.</title>
        <authorList>
            <person name="Klein V.J."/>
            <person name="Trooeyen S.H."/>
            <person name="Fernandes Brito L."/>
            <person name="Courtade G."/>
            <person name="Brautaset T."/>
            <person name="Irla M."/>
        </authorList>
    </citation>
    <scope>FUNCTION</scope>
    <scope>CATALYTIC ACTIVITY</scope>
    <scope>COFACTOR</scope>
    <scope>ACTIVITY REGULATION</scope>
    <scope>BIOPHYSICOCHEMICAL PROPERTIES</scope>
    <scope>DISRUPTION PHENOTYPE</scope>
    <source>
        <strain>168</strain>
    </source>
</reference>
<gene>
    <name evidence="5" type="primary">yycR</name>
    <name evidence="7" type="ordered locus">BSU40250</name>
</gene>
<name>FALDH_BACSU</name>
<organism>
    <name type="scientific">Bacillus subtilis (strain 168)</name>
    <dbReference type="NCBI Taxonomy" id="224308"/>
    <lineage>
        <taxon>Bacteria</taxon>
        <taxon>Bacillati</taxon>
        <taxon>Bacillota</taxon>
        <taxon>Bacilli</taxon>
        <taxon>Bacillales</taxon>
        <taxon>Bacillaceae</taxon>
        <taxon>Bacillus</taxon>
    </lineage>
</organism>
<sequence length="408" mass="42947">MGGMALTGNKAVVYKGKGTVAVEDIGYPELILRDGPGVPKANVNRKCEHGVILKVITTNICGSDQHMVRGRTTAPEGLVLGHEITGEVIETGRDVEFIKKGDIVSVPFNIACGRCVMCKTQKTHVCLNVNPDRPGSAYGYVDMGGWVGGQSEYVMVPYADFQLLVFPDKEQALEKILDLTMLSDIFPTGFHGAYTAGVQTGSTVYIAGAGPVGLAAAHSAQLLGASTVIVGDLNEDRLAQARSFGCETVNVQKHDRLGEQIEQILGEPTVDAAVDCVGFEASGHGNQGEAPAAVLNSIMDVTQVGGSLGIPGLYVTEDPGAKDADAKTGSLKIRFGLGWAKAHTFVTGQTPAMTYNRNLMKAILSGRAQIAKAVNATVISLDDAPKGYSDFDKGAAKKFVIDPHGTLK</sequence>
<proteinExistence type="evidence at protein level"/>
<accession>Q45604</accession>
<accession>Q794W4</accession>
<feature type="chain" id="PRO_0000378094" description="Glutathione-independent formaldehyde dehydrogenase">
    <location>
        <begin position="1"/>
        <end position="408"/>
    </location>
</feature>
<feature type="binding site" evidence="1">
    <location>
        <position position="61"/>
    </location>
    <ligand>
        <name>Zn(2+)</name>
        <dbReference type="ChEBI" id="CHEBI:29105"/>
        <label>1</label>
        <note>catalytic</note>
    </ligand>
</feature>
<feature type="binding site" evidence="1">
    <location>
        <position position="62"/>
    </location>
    <ligand>
        <name>NAD(+)</name>
        <dbReference type="ChEBI" id="CHEBI:57540"/>
    </ligand>
</feature>
<feature type="binding site" evidence="1">
    <location>
        <position position="63"/>
    </location>
    <ligand>
        <name>NAD(+)</name>
        <dbReference type="ChEBI" id="CHEBI:57540"/>
    </ligand>
</feature>
<feature type="binding site" evidence="1">
    <location>
        <position position="66"/>
    </location>
    <ligand>
        <name>NAD(+)</name>
        <dbReference type="ChEBI" id="CHEBI:57540"/>
    </ligand>
</feature>
<feature type="binding site" evidence="1">
    <location>
        <position position="82"/>
    </location>
    <ligand>
        <name>Zn(2+)</name>
        <dbReference type="ChEBI" id="CHEBI:29105"/>
        <label>1</label>
        <note>catalytic</note>
    </ligand>
</feature>
<feature type="binding site" evidence="1">
    <location>
        <position position="112"/>
    </location>
    <ligand>
        <name>Zn(2+)</name>
        <dbReference type="ChEBI" id="CHEBI:29105"/>
        <label>2</label>
    </ligand>
</feature>
<feature type="binding site" evidence="1">
    <location>
        <position position="115"/>
    </location>
    <ligand>
        <name>Zn(2+)</name>
        <dbReference type="ChEBI" id="CHEBI:29105"/>
        <label>2</label>
    </ligand>
</feature>
<feature type="binding site" evidence="1">
    <location>
        <position position="118"/>
    </location>
    <ligand>
        <name>Zn(2+)</name>
        <dbReference type="ChEBI" id="CHEBI:29105"/>
        <label>2</label>
    </ligand>
</feature>
<feature type="binding site" evidence="1">
    <location>
        <position position="126"/>
    </location>
    <ligand>
        <name>Zn(2+)</name>
        <dbReference type="ChEBI" id="CHEBI:29105"/>
        <label>2</label>
    </ligand>
</feature>
<feature type="binding site" evidence="1">
    <location>
        <position position="184"/>
    </location>
    <ligand>
        <name>Zn(2+)</name>
        <dbReference type="ChEBI" id="CHEBI:29105"/>
        <label>1</label>
        <note>catalytic</note>
    </ligand>
</feature>
<feature type="binding site" evidence="1">
    <location>
        <position position="212"/>
    </location>
    <ligand>
        <name>NAD(+)</name>
        <dbReference type="ChEBI" id="CHEBI:57540"/>
    </ligand>
</feature>
<feature type="binding site" evidence="1">
    <location>
        <position position="232"/>
    </location>
    <ligand>
        <name>NAD(+)</name>
        <dbReference type="ChEBI" id="CHEBI:57540"/>
    </ligand>
</feature>
<feature type="binding site" evidence="1">
    <location>
        <position position="237"/>
    </location>
    <ligand>
        <name>NAD(+)</name>
        <dbReference type="ChEBI" id="CHEBI:57540"/>
    </ligand>
</feature>
<feature type="binding site" evidence="1">
    <location>
        <position position="277"/>
    </location>
    <ligand>
        <name>NAD(+)</name>
        <dbReference type="ChEBI" id="CHEBI:57540"/>
    </ligand>
</feature>
<feature type="binding site" evidence="1">
    <location>
        <position position="284"/>
    </location>
    <ligand>
        <name>NAD(+)</name>
        <dbReference type="ChEBI" id="CHEBI:57540"/>
    </ligand>
</feature>
<feature type="binding site" evidence="1">
    <location>
        <position position="311"/>
    </location>
    <ligand>
        <name>NAD(+)</name>
        <dbReference type="ChEBI" id="CHEBI:57540"/>
    </ligand>
</feature>
<feature type="binding site" evidence="1">
    <location>
        <position position="313"/>
    </location>
    <ligand>
        <name>NAD(+)</name>
        <dbReference type="ChEBI" id="CHEBI:57540"/>
    </ligand>
</feature>
<feature type="binding site" evidence="1">
    <location>
        <position position="348"/>
    </location>
    <ligand>
        <name>NAD(+)</name>
        <dbReference type="ChEBI" id="CHEBI:57540"/>
    </ligand>
</feature>
<feature type="binding site" evidence="1">
    <location>
        <position position="350"/>
    </location>
    <ligand>
        <name>NAD(+)</name>
        <dbReference type="ChEBI" id="CHEBI:57540"/>
    </ligand>
</feature>
<comment type="function">
    <text evidence="3">Dehydrogenase that catalyzes the NAD(+)-dependent oxidation of formaldehyde (PubMed:39470218). Exhibits lower activity with acetaldehyde (about 10-fold lower than for formaldehyde), but cannot use methanol, ethanol, 1-butanol, glyoxal or formic acid (PubMed:39470218). Is involved in formaldehyde detoxification (PubMed:39470218).</text>
</comment>
<comment type="catalytic activity">
    <reaction evidence="3">
        <text>formaldehyde + NAD(+) + H2O = formate + NADH + 2 H(+)</text>
        <dbReference type="Rhea" id="RHEA:16425"/>
        <dbReference type="ChEBI" id="CHEBI:15377"/>
        <dbReference type="ChEBI" id="CHEBI:15378"/>
        <dbReference type="ChEBI" id="CHEBI:15740"/>
        <dbReference type="ChEBI" id="CHEBI:16842"/>
        <dbReference type="ChEBI" id="CHEBI:57540"/>
        <dbReference type="ChEBI" id="CHEBI:57945"/>
        <dbReference type="EC" id="1.2.1.46"/>
    </reaction>
    <physiologicalReaction direction="left-to-right" evidence="3">
        <dbReference type="Rhea" id="RHEA:16426"/>
    </physiologicalReaction>
</comment>
<comment type="cofactor">
    <cofactor evidence="3">
        <name>Zn(2+)</name>
        <dbReference type="ChEBI" id="CHEBI:29105"/>
    </cofactor>
    <text evidence="1">Binds 2 Zn(2+) ions per subunit.</text>
</comment>
<comment type="activity regulation">
    <text evidence="3">Activity is not inhibited by EDTA, which is probably not sufficient to displace the bound metal.</text>
</comment>
<comment type="biophysicochemical properties">
    <kinetics>
        <KM evidence="3">0.19 mM for formaldehyde</KM>
        <text evidence="3">kcat is 0.52 sec(-1).</text>
    </kinetics>
    <phDependence>
        <text evidence="3">Optimum pH is 9.5.</text>
    </phDependence>
    <temperatureDependence>
        <text evidence="3">Optimum temperature is 40 degrees Celsius (PubMed:39470218). Stable at 30 degrees Celsius for 1 hour, with slightly lower activity at 40 degrees Celsius, whereas almost no activity could be measured after 1-hour incubation at 50 degrees Celsius and above (PubMed:39470218).</text>
    </temperatureDependence>
</comment>
<comment type="disruption phenotype">
    <text evidence="2 3">The deletion mutant displays a reduced formaldehyde tolerance level (PubMed:39470218). Cells lacking this gene retain acetoin reductase/2,3-butanediol dehydrogenase activity (PubMed:18820069).</text>
</comment>
<comment type="similarity">
    <text evidence="6">Belongs to the zinc-containing alcohol dehydrogenase family.</text>
</comment>